<protein>
    <recommendedName>
        <fullName evidence="3">Small ribosomal subunit protein uS4c</fullName>
    </recommendedName>
    <alternativeName>
        <fullName>30S ribosomal protein S4, chloroplastic</fullName>
    </alternativeName>
</protein>
<geneLocation type="chloroplast"/>
<evidence type="ECO:0000250" key="1"/>
<evidence type="ECO:0000256" key="2">
    <source>
        <dbReference type="SAM" id="MobiDB-lite"/>
    </source>
</evidence>
<evidence type="ECO:0000305" key="3"/>
<name>RR4_EUGGR</name>
<sequence length="205" mass="23696">MSRYRGPRLRIVRRIGKLPSLTNKTSKKRKSPGQPATSFKRKKKISKYNIRLKEKQKLRFNYGITERQLLNYVKKSRKKKGSSGRFLLTFLEMRLDNIVHRIGFAPTIMAAKQLINHGHICVDDKVINIPSFICQPKSIIKPKKSTVSENVIQKNIESKELLLIPPHLSLNKKNLEAKIIGLINRKAISLIVNELLVIEFYSRKV</sequence>
<accession>P27418</accession>
<proteinExistence type="inferred from homology"/>
<keyword id="KW-0150">Chloroplast</keyword>
<keyword id="KW-0934">Plastid</keyword>
<keyword id="KW-0687">Ribonucleoprotein</keyword>
<keyword id="KW-0689">Ribosomal protein</keyword>
<keyword id="KW-0694">RNA-binding</keyword>
<keyword id="KW-0699">rRNA-binding</keyword>
<feature type="chain" id="PRO_0000132584" description="Small ribosomal subunit protein uS4c">
    <location>
        <begin position="1"/>
        <end position="205"/>
    </location>
</feature>
<feature type="domain" description="S4 RNA-binding">
    <location>
        <begin position="93"/>
        <end position="161"/>
    </location>
</feature>
<feature type="region of interest" description="Disordered" evidence="2">
    <location>
        <begin position="16"/>
        <end position="40"/>
    </location>
</feature>
<gene>
    <name type="primary">rps4</name>
</gene>
<comment type="function">
    <text evidence="1">One of the primary rRNA binding proteins, it binds directly to 16S rRNA where it nucleates assembly of the body of the 30S subunit.</text>
</comment>
<comment type="function">
    <text evidence="1">With S5 and S12 plays an important role in translational accuracy.</text>
</comment>
<comment type="subunit">
    <text evidence="1">Part of the 30S ribosomal subunit. Contacts protein S5. The interaction surface between S4 and S5 is involved in control of translational fidelity (By similarity).</text>
</comment>
<comment type="subcellular location">
    <subcellularLocation>
        <location>Plastid</location>
        <location>Chloroplast</location>
    </subcellularLocation>
</comment>
<comment type="similarity">
    <text evidence="3">Belongs to the universal ribosomal protein uS4 family.</text>
</comment>
<dbReference type="EMBL" id="Z11874">
    <property type="status" value="NOT_ANNOTATED_CDS"/>
    <property type="molecule type" value="Genomic_DNA"/>
</dbReference>
<dbReference type="EMBL" id="M22010">
    <property type="protein sequence ID" value="AAA84230.1"/>
    <property type="molecule type" value="Genomic_DNA"/>
</dbReference>
<dbReference type="EMBL" id="X70810">
    <property type="protein sequence ID" value="CAA50134.1"/>
    <property type="molecule type" value="Genomic_DNA"/>
</dbReference>
<dbReference type="PIR" id="S34919">
    <property type="entry name" value="S34919"/>
</dbReference>
<dbReference type="RefSeq" id="NP_041947.1">
    <property type="nucleotide sequence ID" value="NC_001603.2"/>
</dbReference>
<dbReference type="SMR" id="P27418"/>
<dbReference type="GeneID" id="807517"/>
<dbReference type="GO" id="GO:0009507">
    <property type="term" value="C:chloroplast"/>
    <property type="evidence" value="ECO:0007669"/>
    <property type="project" value="UniProtKB-SubCell"/>
</dbReference>
<dbReference type="GO" id="GO:0015935">
    <property type="term" value="C:small ribosomal subunit"/>
    <property type="evidence" value="ECO:0007669"/>
    <property type="project" value="InterPro"/>
</dbReference>
<dbReference type="GO" id="GO:0019843">
    <property type="term" value="F:rRNA binding"/>
    <property type="evidence" value="ECO:0007669"/>
    <property type="project" value="UniProtKB-UniRule"/>
</dbReference>
<dbReference type="GO" id="GO:0003735">
    <property type="term" value="F:structural constituent of ribosome"/>
    <property type="evidence" value="ECO:0007669"/>
    <property type="project" value="InterPro"/>
</dbReference>
<dbReference type="GO" id="GO:0042274">
    <property type="term" value="P:ribosomal small subunit biogenesis"/>
    <property type="evidence" value="ECO:0007669"/>
    <property type="project" value="TreeGrafter"/>
</dbReference>
<dbReference type="GO" id="GO:0006412">
    <property type="term" value="P:translation"/>
    <property type="evidence" value="ECO:0007669"/>
    <property type="project" value="UniProtKB-UniRule"/>
</dbReference>
<dbReference type="CDD" id="cd00165">
    <property type="entry name" value="S4"/>
    <property type="match status" value="1"/>
</dbReference>
<dbReference type="FunFam" id="3.10.290.10:FF:000001">
    <property type="entry name" value="30S ribosomal protein S4"/>
    <property type="match status" value="1"/>
</dbReference>
<dbReference type="FunFam" id="1.10.1050.10:FF:000002">
    <property type="entry name" value="30S ribosomal protein S4, chloroplastic"/>
    <property type="match status" value="1"/>
</dbReference>
<dbReference type="Gene3D" id="1.10.1050.10">
    <property type="entry name" value="Ribosomal Protein S4 Delta 41, Chain A, domain 1"/>
    <property type="match status" value="1"/>
</dbReference>
<dbReference type="Gene3D" id="3.10.290.10">
    <property type="entry name" value="RNA-binding S4 domain"/>
    <property type="match status" value="1"/>
</dbReference>
<dbReference type="HAMAP" id="MF_01306_B">
    <property type="entry name" value="Ribosomal_uS4_B"/>
    <property type="match status" value="1"/>
</dbReference>
<dbReference type="InterPro" id="IPR022801">
    <property type="entry name" value="Ribosomal_uS4"/>
</dbReference>
<dbReference type="InterPro" id="IPR005709">
    <property type="entry name" value="Ribosomal_uS4_bac-type"/>
</dbReference>
<dbReference type="InterPro" id="IPR018079">
    <property type="entry name" value="Ribosomal_uS4_CS"/>
</dbReference>
<dbReference type="InterPro" id="IPR001912">
    <property type="entry name" value="Ribosomal_uS4_N"/>
</dbReference>
<dbReference type="InterPro" id="IPR002942">
    <property type="entry name" value="S4_RNA-bd"/>
</dbReference>
<dbReference type="InterPro" id="IPR036986">
    <property type="entry name" value="S4_RNA-bd_sf"/>
</dbReference>
<dbReference type="NCBIfam" id="NF003717">
    <property type="entry name" value="PRK05327.1"/>
    <property type="match status" value="1"/>
</dbReference>
<dbReference type="NCBIfam" id="TIGR01017">
    <property type="entry name" value="rpsD_bact"/>
    <property type="match status" value="1"/>
</dbReference>
<dbReference type="PANTHER" id="PTHR11831">
    <property type="entry name" value="30S 40S RIBOSOMAL PROTEIN"/>
    <property type="match status" value="1"/>
</dbReference>
<dbReference type="PANTHER" id="PTHR11831:SF4">
    <property type="entry name" value="SMALL RIBOSOMAL SUBUNIT PROTEIN US4M"/>
    <property type="match status" value="1"/>
</dbReference>
<dbReference type="Pfam" id="PF00163">
    <property type="entry name" value="Ribosomal_S4"/>
    <property type="match status" value="1"/>
</dbReference>
<dbReference type="Pfam" id="PF01479">
    <property type="entry name" value="S4"/>
    <property type="match status" value="1"/>
</dbReference>
<dbReference type="SMART" id="SM01390">
    <property type="entry name" value="Ribosomal_S4"/>
    <property type="match status" value="1"/>
</dbReference>
<dbReference type="SMART" id="SM00363">
    <property type="entry name" value="S4"/>
    <property type="match status" value="1"/>
</dbReference>
<dbReference type="SUPFAM" id="SSF55174">
    <property type="entry name" value="Alpha-L RNA-binding motif"/>
    <property type="match status" value="1"/>
</dbReference>
<dbReference type="PROSITE" id="PS00632">
    <property type="entry name" value="RIBOSOMAL_S4"/>
    <property type="match status" value="1"/>
</dbReference>
<dbReference type="PROSITE" id="PS50889">
    <property type="entry name" value="S4"/>
    <property type="match status" value="1"/>
</dbReference>
<reference key="1">
    <citation type="journal article" date="1991" name="Mol. Gen. Genet.">
        <title>Intercistronic group III introns in polycistronic ribosomal protein operons of chloroplasts.</title>
        <authorList>
            <person name="Stevenson J.K."/>
            <person name="Drager R.G."/>
            <person name="Copertino D.W."/>
            <person name="Christopher D.A."/>
            <person name="Jenkins K.P."/>
            <person name="Yepiz-Plascencia G."/>
            <person name="Hallick R.B."/>
        </authorList>
    </citation>
    <scope>NUCLEOTIDE SEQUENCE [GENOMIC DNA]</scope>
    <source>
        <strain>Z / UTEX 753</strain>
    </source>
</reference>
<reference key="2">
    <citation type="journal article" date="1993" name="Nucleic Acids Res.">
        <title>Complete sequence of Euglena gracilis chloroplast DNA.</title>
        <authorList>
            <person name="Hallick R.B."/>
            <person name="Hong L."/>
            <person name="Drager R.G."/>
            <person name="Favreau M.R."/>
            <person name="Monfort A."/>
            <person name="Orsat B."/>
            <person name="Spielmann A."/>
            <person name="Stutz E."/>
        </authorList>
    </citation>
    <scope>NUCLEOTIDE SEQUENCE [LARGE SCALE GENOMIC DNA]</scope>
    <source>
        <strain>Z / UTEX 753</strain>
    </source>
</reference>
<organism>
    <name type="scientific">Euglena gracilis</name>
    <dbReference type="NCBI Taxonomy" id="3039"/>
    <lineage>
        <taxon>Eukaryota</taxon>
        <taxon>Discoba</taxon>
        <taxon>Euglenozoa</taxon>
        <taxon>Euglenida</taxon>
        <taxon>Spirocuta</taxon>
        <taxon>Euglenophyceae</taxon>
        <taxon>Euglenales</taxon>
        <taxon>Euglenaceae</taxon>
        <taxon>Euglena</taxon>
    </lineage>
</organism>